<sequence length="290" mass="32583">MDTILVFSLMIASYDSNKNDLRKSSCQVEQWPSFFSEDVRSNKDLVVRVPLEIHTDTKGTPFIQNQPIATLRCLGSGRRVTVHLVYSERRPKVKYIMKNLPVITDLPRNSTASPRCHLRATSQFQNGSLLTAFLPGISQCTVYSAKDRSASSEMVPITTSSTTPRSKGDEATSTGAFPNPLTQGIDMSLKRRQKWSLVVKALIAVTLLLGGAAIIVFVIFEVPCPSQCLRVRQLCQCQWLWRRKRKEEDQKPGTTESQLDSQPEKVKHNVPNSSDSKKTTDIAIIYQTYF</sequence>
<name>CQ078_MOUSE</name>
<evidence type="ECO:0000255" key="1"/>
<evidence type="ECO:0000256" key="2">
    <source>
        <dbReference type="SAM" id="MobiDB-lite"/>
    </source>
</evidence>
<evidence type="ECO:0000305" key="3"/>
<keyword id="KW-0472">Membrane</keyword>
<keyword id="KW-1185">Reference proteome</keyword>
<keyword id="KW-0812">Transmembrane</keyword>
<keyword id="KW-1133">Transmembrane helix</keyword>
<dbReference type="EMBL" id="AJ844653">
    <property type="protein sequence ID" value="CAH59902.1"/>
    <property type="molecule type" value="mRNA"/>
</dbReference>
<dbReference type="EMBL" id="AL596447">
    <property type="status" value="NOT_ANNOTATED_CDS"/>
    <property type="molecule type" value="Genomic_DNA"/>
</dbReference>
<dbReference type="EMBL" id="BC147775">
    <property type="protein sequence ID" value="AAI47776.1"/>
    <property type="molecule type" value="mRNA"/>
</dbReference>
<dbReference type="EMBL" id="BC147791">
    <property type="protein sequence ID" value="AAI47792.1"/>
    <property type="molecule type" value="mRNA"/>
</dbReference>
<dbReference type="CCDS" id="CCDS25184.1"/>
<dbReference type="RefSeq" id="NP_001033021.2">
    <property type="nucleotide sequence ID" value="NM_001037932.2"/>
</dbReference>
<dbReference type="SMR" id="Q5QR91"/>
<dbReference type="STRING" id="10090.ENSMUSP00000056084"/>
<dbReference type="iPTMnet" id="Q5QR91"/>
<dbReference type="PhosphoSitePlus" id="Q5QR91"/>
<dbReference type="PaxDb" id="10090-ENSMUSP00000056084"/>
<dbReference type="ProteomicsDB" id="284009"/>
<dbReference type="Antibodypedia" id="73298">
    <property type="antibodies" value="75 antibodies from 17 providers"/>
</dbReference>
<dbReference type="Ensembl" id="ENSMUST00000050771.8">
    <property type="protein sequence ID" value="ENSMUSP00000056084.8"/>
    <property type="gene ID" value="ENSMUSG00000051452.9"/>
</dbReference>
<dbReference type="GeneID" id="628813"/>
<dbReference type="KEGG" id="mmu:628813"/>
<dbReference type="UCSC" id="uc007kqi.2">
    <property type="organism name" value="mouse"/>
</dbReference>
<dbReference type="AGR" id="MGI:3650287"/>
<dbReference type="MGI" id="MGI:3650287">
    <property type="gene designation" value="Gm11437"/>
</dbReference>
<dbReference type="VEuPathDB" id="HostDB:ENSMUSG00000051452"/>
<dbReference type="eggNOG" id="ENOG502SUFK">
    <property type="taxonomic scope" value="Eukaryota"/>
</dbReference>
<dbReference type="GeneTree" id="ENSGT00390000008122"/>
<dbReference type="HOGENOM" id="CLU_083643_0_0_1"/>
<dbReference type="InParanoid" id="Q5QR91"/>
<dbReference type="OMA" id="FIIFEVP"/>
<dbReference type="OrthoDB" id="9118309at2759"/>
<dbReference type="PhylomeDB" id="Q5QR91"/>
<dbReference type="TreeFam" id="TF337703"/>
<dbReference type="BioGRID-ORCS" id="628813">
    <property type="hits" value="1 hit in 68 CRISPR screens"/>
</dbReference>
<dbReference type="ChiTaRS" id="Gm11437">
    <property type="organism name" value="mouse"/>
</dbReference>
<dbReference type="PRO" id="PR:Q5QR91"/>
<dbReference type="Proteomes" id="UP000000589">
    <property type="component" value="Chromosome 11"/>
</dbReference>
<dbReference type="RNAct" id="Q5QR91">
    <property type="molecule type" value="protein"/>
</dbReference>
<dbReference type="Bgee" id="ENSMUSG00000051452">
    <property type="expression patterns" value="Expressed in jejunum and 6 other cell types or tissues"/>
</dbReference>
<dbReference type="GO" id="GO:0016020">
    <property type="term" value="C:membrane"/>
    <property type="evidence" value="ECO:0007669"/>
    <property type="project" value="UniProtKB-SubCell"/>
</dbReference>
<dbReference type="InterPro" id="IPR031668">
    <property type="entry name" value="DUF4711"/>
</dbReference>
<dbReference type="PANTHER" id="PTHR36870">
    <property type="entry name" value="C17ORF78 ISOFORM 2"/>
    <property type="match status" value="1"/>
</dbReference>
<dbReference type="PANTHER" id="PTHR36870:SF1">
    <property type="entry name" value="CHROMOSOME 17 C17ORF78 HOMOLOG"/>
    <property type="match status" value="1"/>
</dbReference>
<dbReference type="Pfam" id="PF15829">
    <property type="entry name" value="DUF4711"/>
    <property type="match status" value="1"/>
</dbReference>
<gene>
    <name type="primary">Gm11437</name>
</gene>
<organism>
    <name type="scientific">Mus musculus</name>
    <name type="common">Mouse</name>
    <dbReference type="NCBI Taxonomy" id="10090"/>
    <lineage>
        <taxon>Eukaryota</taxon>
        <taxon>Metazoa</taxon>
        <taxon>Chordata</taxon>
        <taxon>Craniata</taxon>
        <taxon>Vertebrata</taxon>
        <taxon>Euteleostomi</taxon>
        <taxon>Mammalia</taxon>
        <taxon>Eutheria</taxon>
        <taxon>Euarchontoglires</taxon>
        <taxon>Glires</taxon>
        <taxon>Rodentia</taxon>
        <taxon>Myomorpha</taxon>
        <taxon>Muroidea</taxon>
        <taxon>Muridae</taxon>
        <taxon>Murinae</taxon>
        <taxon>Mus</taxon>
        <taxon>Mus</taxon>
    </lineage>
</organism>
<accession>Q5QR91</accession>
<accession>B0QZI9</accession>
<accession>B9EK11</accession>
<accession>Q5SWU4</accession>
<feature type="chain" id="PRO_0000300631" description="Uncharacterized protein C17orf78 homolog">
    <location>
        <begin position="1"/>
        <end position="290"/>
    </location>
</feature>
<feature type="transmembrane region" description="Helical" evidence="1">
    <location>
        <begin position="202"/>
        <end position="222"/>
    </location>
</feature>
<feature type="region of interest" description="Disordered" evidence="2">
    <location>
        <begin position="153"/>
        <end position="178"/>
    </location>
</feature>
<feature type="region of interest" description="Disordered" evidence="2">
    <location>
        <begin position="246"/>
        <end position="276"/>
    </location>
</feature>
<feature type="compositionally biased region" description="Polar residues" evidence="2">
    <location>
        <begin position="157"/>
        <end position="178"/>
    </location>
</feature>
<feature type="compositionally biased region" description="Polar residues" evidence="2">
    <location>
        <begin position="252"/>
        <end position="261"/>
    </location>
</feature>
<feature type="sequence conflict" description="In Ref. 1; CAH59902." evidence="3" ref="1">
    <original>Q</original>
    <variation>R</variation>
    <location>
        <position position="64"/>
    </location>
</feature>
<protein>
    <recommendedName>
        <fullName>Uncharacterized protein C17orf78 homolog</fullName>
    </recommendedName>
</protein>
<comment type="subcellular location">
    <subcellularLocation>
        <location evidence="3">Membrane</location>
        <topology evidence="3">Single-pass membrane protein</topology>
    </subcellularLocation>
</comment>
<reference key="1">
    <citation type="submission" date="2004-10" db="EMBL/GenBank/DDBJ databases">
        <title>Tissue-specific expression of a protein encoding gene located within intron 1 of the mammalian Acetyl-CoA carboxylase-alpha gene.</title>
        <authorList>
            <person name="Barber M.C."/>
            <person name="Travers M.T."/>
        </authorList>
    </citation>
    <scope>NUCLEOTIDE SEQUENCE [MRNA]</scope>
    <source>
        <strain>SWR/J</strain>
        <tissue>Liver</tissue>
    </source>
</reference>
<reference key="2">
    <citation type="journal article" date="2009" name="PLoS Biol.">
        <title>Lineage-specific biology revealed by a finished genome assembly of the mouse.</title>
        <authorList>
            <person name="Church D.M."/>
            <person name="Goodstadt L."/>
            <person name="Hillier L.W."/>
            <person name="Zody M.C."/>
            <person name="Goldstein S."/>
            <person name="She X."/>
            <person name="Bult C.J."/>
            <person name="Agarwala R."/>
            <person name="Cherry J.L."/>
            <person name="DiCuccio M."/>
            <person name="Hlavina W."/>
            <person name="Kapustin Y."/>
            <person name="Meric P."/>
            <person name="Maglott D."/>
            <person name="Birtle Z."/>
            <person name="Marques A.C."/>
            <person name="Graves T."/>
            <person name="Zhou S."/>
            <person name="Teague B."/>
            <person name="Potamousis K."/>
            <person name="Churas C."/>
            <person name="Place M."/>
            <person name="Herschleb J."/>
            <person name="Runnheim R."/>
            <person name="Forrest D."/>
            <person name="Amos-Landgraf J."/>
            <person name="Schwartz D.C."/>
            <person name="Cheng Z."/>
            <person name="Lindblad-Toh K."/>
            <person name="Eichler E.E."/>
            <person name="Ponting C.P."/>
        </authorList>
    </citation>
    <scope>NUCLEOTIDE SEQUENCE [LARGE SCALE GENOMIC DNA]</scope>
    <source>
        <strain>C57BL/6J</strain>
    </source>
</reference>
<reference key="3">
    <citation type="journal article" date="2004" name="Genome Res.">
        <title>The status, quality, and expansion of the NIH full-length cDNA project: the Mammalian Gene Collection (MGC).</title>
        <authorList>
            <consortium name="The MGC Project Team"/>
        </authorList>
    </citation>
    <scope>NUCLEOTIDE SEQUENCE [LARGE SCALE MRNA]</scope>
    <source>
        <tissue>Brain</tissue>
    </source>
</reference>
<proteinExistence type="evidence at transcript level"/>